<organism>
    <name type="scientific">Phoca vitulina</name>
    <name type="common">Harbor seal</name>
    <dbReference type="NCBI Taxonomy" id="9720"/>
    <lineage>
        <taxon>Eukaryota</taxon>
        <taxon>Metazoa</taxon>
        <taxon>Chordata</taxon>
        <taxon>Craniata</taxon>
        <taxon>Vertebrata</taxon>
        <taxon>Euteleostomi</taxon>
        <taxon>Mammalia</taxon>
        <taxon>Eutheria</taxon>
        <taxon>Laurasiatheria</taxon>
        <taxon>Carnivora</taxon>
        <taxon>Caniformia</taxon>
        <taxon>Pinnipedia</taxon>
        <taxon>Phocidae</taxon>
        <taxon>Phocinae</taxon>
        <taxon>Phoca</taxon>
    </lineage>
</organism>
<proteinExistence type="inferred from homology"/>
<sequence length="100" mass="11193">MKLLALAVLLLAVCSLEGAFVRRQAEEPNLQSLVAQYFQTMTDYGKDLLEKAKGPELQAQAKAYFEKTQEQLTPLVKKAGTDLINFLSNFMDLRTQPATQ</sequence>
<accession>P0DTR2</accession>
<dbReference type="EMBL" id="RXNX01014799">
    <property type="status" value="NOT_ANNOTATED_CDS"/>
    <property type="molecule type" value="Genomic_DNA"/>
</dbReference>
<dbReference type="SMR" id="P0DTR2"/>
<dbReference type="GO" id="GO:0034366">
    <property type="term" value="C:spherical high-density lipoprotein particle"/>
    <property type="evidence" value="ECO:0007669"/>
    <property type="project" value="TreeGrafter"/>
</dbReference>
<dbReference type="GO" id="GO:0120020">
    <property type="term" value="F:cholesterol transfer activity"/>
    <property type="evidence" value="ECO:0007669"/>
    <property type="project" value="TreeGrafter"/>
</dbReference>
<dbReference type="GO" id="GO:0008035">
    <property type="term" value="F:high-density lipoprotein particle binding"/>
    <property type="evidence" value="ECO:0007669"/>
    <property type="project" value="TreeGrafter"/>
</dbReference>
<dbReference type="GO" id="GO:0008289">
    <property type="term" value="F:lipid binding"/>
    <property type="evidence" value="ECO:0007669"/>
    <property type="project" value="InterPro"/>
</dbReference>
<dbReference type="GO" id="GO:0042632">
    <property type="term" value="P:cholesterol homeostasis"/>
    <property type="evidence" value="ECO:0007669"/>
    <property type="project" value="TreeGrafter"/>
</dbReference>
<dbReference type="GO" id="GO:0030301">
    <property type="term" value="P:cholesterol transport"/>
    <property type="evidence" value="ECO:0007669"/>
    <property type="project" value="TreeGrafter"/>
</dbReference>
<dbReference type="GO" id="GO:0042157">
    <property type="term" value="P:lipoprotein metabolic process"/>
    <property type="evidence" value="ECO:0007669"/>
    <property type="project" value="InterPro"/>
</dbReference>
<dbReference type="Gene3D" id="6.10.250.100">
    <property type="match status" value="1"/>
</dbReference>
<dbReference type="InterPro" id="IPR006801">
    <property type="entry name" value="ApoA-II"/>
</dbReference>
<dbReference type="InterPro" id="IPR036172">
    <property type="entry name" value="ApoA-II_sf"/>
</dbReference>
<dbReference type="PANTHER" id="PTHR11027">
    <property type="entry name" value="APOLIPOPROTEIN A-II"/>
    <property type="match status" value="1"/>
</dbReference>
<dbReference type="PANTHER" id="PTHR11027:SF0">
    <property type="entry name" value="APOLIPOPROTEIN A-II"/>
    <property type="match status" value="1"/>
</dbReference>
<dbReference type="Pfam" id="PF04711">
    <property type="entry name" value="ApoA-II"/>
    <property type="match status" value="1"/>
</dbReference>
<dbReference type="SUPFAM" id="SSF82936">
    <property type="entry name" value="Apolipoprotein A-II"/>
    <property type="match status" value="1"/>
</dbReference>
<comment type="function">
    <text>May stabilize HDL (high density lipoprotein) structure by its association with lipids, and affect the HDL metabolism.</text>
</comment>
<comment type="subunit">
    <text evidence="1">Monomer. Interacts with NAXE and NDRG1 (By similarity).</text>
</comment>
<comment type="subcellular location">
    <subcellularLocation>
        <location evidence="1">Secreted</location>
    </subcellularLocation>
</comment>
<comment type="similarity">
    <text evidence="3">Belongs to the apolipoprotein A2 family.</text>
</comment>
<name>APOA2_PHOVI</name>
<reference key="1">
    <citation type="submission" date="2018-12" db="EMBL/GenBank/DDBJ databases">
        <authorList>
            <person name="Culibrk L."/>
            <person name="Leelakumari S."/>
            <person name="Taylor G.A."/>
            <person name="Tse K."/>
            <person name="Cheng D."/>
            <person name="Chuah E."/>
            <person name="Kirk H."/>
            <person name="Pandoh P."/>
            <person name="Troussard A."/>
            <person name="Zhao Y."/>
            <person name="Mungall A."/>
            <person name="Moore R."/>
            <person name="Akhurst L."/>
            <person name="Marra M.A."/>
            <person name="Haulena M."/>
            <person name="Jones S.J.M."/>
        </authorList>
    </citation>
    <scope>NUCLEOTIDE SEQUENCE [LARGE SCALE GENOMIC DNA]</scope>
</reference>
<reference key="2">
    <citation type="unpublished observations" date="2019-09">
        <authorList>
            <person name="Puppione D.L."/>
        </authorList>
    </citation>
    <scope>IDENTIFICATION</scope>
</reference>
<evidence type="ECO:0000250" key="1">
    <source>
        <dbReference type="UniProtKB" id="P02652"/>
    </source>
</evidence>
<evidence type="ECO:0000255" key="2"/>
<evidence type="ECO:0000305" key="3"/>
<feature type="signal peptide" evidence="2">
    <location>
        <begin position="1"/>
        <end position="18"/>
    </location>
</feature>
<feature type="chain" id="PRO_0000448521" description="Proapolipoprotein A-II">
    <location>
        <begin position="19"/>
        <end position="100"/>
    </location>
</feature>
<feature type="chain" id="PRO_0000448522" description="Apolipoprotein A-II" evidence="1">
    <location>
        <begin position="24"/>
        <end position="100"/>
    </location>
</feature>
<feature type="chain" id="PRO_0000448523" description="Truncated apolipoprotein A-II" evidence="1">
    <location>
        <begin position="24"/>
        <end position="99"/>
    </location>
</feature>
<feature type="modified residue" description="Pyrrolidone carboxylic acid" evidence="1">
    <location>
        <position position="24"/>
    </location>
</feature>
<gene>
    <name type="primary">APOA2</name>
</gene>
<keyword id="KW-0165">Cleavage on pair of basic residues</keyword>
<keyword id="KW-0345">HDL</keyword>
<keyword id="KW-0445">Lipid transport</keyword>
<keyword id="KW-0558">Oxidation</keyword>
<keyword id="KW-0597">Phosphoprotein</keyword>
<keyword id="KW-0873">Pyrrolidone carboxylic acid</keyword>
<keyword id="KW-0964">Secreted</keyword>
<keyword id="KW-0732">Signal</keyword>
<keyword id="KW-0813">Transport</keyword>
<protein>
    <recommendedName>
        <fullName>Apolipoprotein A-II</fullName>
        <shortName>Apo-AII</shortName>
        <shortName>ApoA-II</shortName>
    </recommendedName>
    <alternativeName>
        <fullName>Apolipoprotein A2</fullName>
    </alternativeName>
    <component>
        <recommendedName>
            <fullName>Proapolipoprotein A-II</fullName>
            <shortName>ProapoA-II</shortName>
        </recommendedName>
    </component>
    <component>
        <recommendedName>
            <fullName>Truncated apolipoprotein A-II</fullName>
        </recommendedName>
    </component>
</protein>